<gene>
    <name evidence="2" type="primary">vif</name>
</gene>
<accession>Q9IDV7</accession>
<organismHost>
    <name type="scientific">Homo sapiens</name>
    <name type="common">Human</name>
    <dbReference type="NCBI Taxonomy" id="9606"/>
</organismHost>
<sequence>MENRWQVMVVWQVDXMKIRTWNSLVKHHMYVSKKAKGWYYRHHYETKHPKTSSEVHIPVGXAXLVIVTYWGLTTGEQPWHLGHXVSIEWRQGKYKTQVDPEMADKLIHCYYFNCFTASAIRQAVLGRPVLPRCXYPAGHXQVGTLQYLAXTAXVGVKKRRPPLPSVTKLTEDRWNERQKTQGHRGNPIMNGP</sequence>
<protein>
    <recommendedName>
        <fullName evidence="2">Virion infectivity factor</fullName>
        <shortName evidence="2">Vif</shortName>
    </recommendedName>
    <alternativeName>
        <fullName evidence="2">SOR protein</fullName>
    </alternativeName>
    <component>
        <recommendedName>
            <fullName evidence="2">p17</fullName>
        </recommendedName>
    </component>
    <component>
        <recommendedName>
            <fullName evidence="2">p7</fullName>
        </recommendedName>
    </component>
</protein>
<reference key="1">
    <citation type="journal article" date="2004" name="AIDS">
        <title>Phylogenetic characteristics of three new HIV-1 N strains and implications for the origin of group N.</title>
        <authorList>
            <person name="Roques P."/>
            <person name="Robertson D.L."/>
            <person name="Souquiere S."/>
            <person name="Apetrei C."/>
            <person name="Nerrienet E."/>
            <person name="Barre-Sinoussi F."/>
            <person name="Muller-Trutwin M."/>
            <person name="Simon F."/>
        </authorList>
    </citation>
    <scope>NUCLEOTIDE SEQUENCE [GENOMIC DNA]</scope>
</reference>
<comment type="function">
    <text evidence="2">Counteracts the innate antiviral activity of host APOBEC3F and APOBEC3G by promoting their ubiquitination and degradation. Acts as a substrate recognition component of an E3 ubiquitin-protein ligase complex: mechanistically, Vif hijacks a host cullin-5-RING E3 ubiquitin-protein ligase complex (ECS complex) and the transcription coactivator CBFB/CBF-beta to form an active E3 ubiquitin-protein ligase complex that targets APOBEC3G and APOBEC3F for polyubiquitination, leading to their degradation by the proteasome. Vif interaction with APOBEC3G also blocks its cytidine deaminase activity in a proteasome-independent manner, suggesting a dual inhibitory mechanism. May interact directly with APOBEC3G mRNA in order to inhibit its translation. Association with CBFB/CBF-beta also inhibits the transcription coactivator activity of CBFB/CBF-beta. Seems to play a role in viral morphology by affecting the stability of the viral nucleoprotein core. Finally, Vif also contributes to the G2 cell cycle arrest observed in HIV infected cells.</text>
</comment>
<comment type="subunit">
    <text evidence="1">Homomultimer; in vitro and presumably in vivo. Interacts with viral RNA and Pr55Gag precursor; these interactions mediate Vif incorporation into the virion. Interacts with the viral reverse transcriptase. Forms cullin-5-RING E3 ubiquitin-protein ligase complex (ECS complex) by interacting with host CUL5, RBX2, elongin BC complex (ELOB and ELOC) and CBFB/CBF-beta. Within the ECS complex, Vif interacts directly with host CUL5, ELOC and APOBEC (APOBEC3F and APOBEC3G) substrates. The ECS complex also contains some single-stranded RNA (ssRNA) that acts as a glue that bridges Vif with APOBEC (APOBEC3F and APOBEC3G) substrates. Interacts with host UBCE7IP1 isoform 3/ZIN and possibly with SAT. Interacts with host tyrosine kinases HCK and FYN; these interactions may decrease level of phosphorylated APOBEC3G incorporation into virions. Interacts with host ABCE1; this interaction may play a role in protecting viral RNA from damage during viral assembly. Interacts with host MDM2; this interaction targets Vif for degradation by the proteasome.</text>
</comment>
<comment type="subcellular location">
    <subcellularLocation>
        <location evidence="2">Host cytoplasm</location>
    </subcellularLocation>
    <subcellularLocation>
        <location evidence="2">Host cell membrane</location>
        <topology evidence="2">Peripheral membrane protein</topology>
        <orientation evidence="2">Cytoplasmic side</orientation>
    </subcellularLocation>
    <subcellularLocation>
        <location evidence="2">Virion</location>
    </subcellularLocation>
    <text evidence="2">In the cytoplasm, seems to colocalize with intermediate filament vimentin. A fraction is associated with the cytoplasmic side of cellular membranes, presumably via the interaction with Pr55Gag precursor. Incorporated in virions at a ratio of approximately 7 to 20 molecules per virion.</text>
</comment>
<comment type="induction">
    <text evidence="2">Expressed late during infection in a Rev-dependent manner.</text>
</comment>
<comment type="domain">
    <text evidence="2">The BC-like-box motif mediates the interaction with elongin BC complex.</text>
</comment>
<comment type="domain">
    <text evidence="2">The HCCH motif (H-x(5)-C-x(18)-C-x(5)-H) mediates the interaction with CUL5.</text>
</comment>
<comment type="PTM">
    <text evidence="2">Processed in virion by the viral protease.</text>
</comment>
<comment type="PTM">
    <text evidence="2">Highly phosphorylated on serine and threonine residues.</text>
</comment>
<comment type="PTM">
    <text evidence="2">Polyubiquitinated and degraded by the proteasome in the presence of APOBEC3G.</text>
</comment>
<comment type="miscellaneous">
    <text evidence="2">Vif-defective viruses show catastrophic failure in reverse transcription due to APOBEC-induced mutations that initiate a DNA base repair pathway and compromise the structural integrity of the ssDNA. In the absence of Vif, the virion is morphologically abnormal.</text>
</comment>
<comment type="miscellaneous">
    <text evidence="2">HIV-1 lineages are divided in three main groups, M (for Major), O (for Outlier), and N (for New, or Non-M, Non-O). The vast majority of strains found worldwide belong to the group M. Group O seems to be endemic to and largely confined to Cameroon and neighboring countries in West Central Africa, where these viruses represent a small minority of HIV-1 strains. The group N is represented by a limited number of isolates from Cameroonian persons. The group M is further subdivided in 9 clades or subtypes (A to D, F to H, J and K).</text>
</comment>
<comment type="miscellaneous">
    <text evidence="2">Required for replication in 'nonpermissive' cells, including primary T-cells, macrophages and certain T-cell lines, but is dispensable for replication in 'permissive' cell lines, such as 293T cells. In nonpermissive cells, Vif-defective viruses can produce virions, but they fail to complete reverse transcription and cannot successfully infect new cells.</text>
</comment>
<comment type="similarity">
    <text evidence="2">Belongs to the primate lentivirus group Vif protein family.</text>
</comment>
<name>VIF_HV1YB</name>
<keyword id="KW-0014">AIDS</keyword>
<keyword id="KW-1032">Host cell membrane</keyword>
<keyword id="KW-1035">Host cytoplasm</keyword>
<keyword id="KW-1043">Host membrane</keyword>
<keyword id="KW-0945">Host-virus interaction</keyword>
<keyword id="KW-0472">Membrane</keyword>
<keyword id="KW-0479">Metal-binding</keyword>
<keyword id="KW-0597">Phosphoprotein</keyword>
<keyword id="KW-0694">RNA-binding</keyword>
<keyword id="KW-0832">Ubl conjugation</keyword>
<keyword id="KW-0833">Ubl conjugation pathway</keyword>
<keyword id="KW-0946">Virion</keyword>
<keyword id="KW-0862">Zinc</keyword>
<evidence type="ECO:0000250" key="1">
    <source>
        <dbReference type="UniProtKB" id="O70897"/>
    </source>
</evidence>
<evidence type="ECO:0000255" key="2">
    <source>
        <dbReference type="HAMAP-Rule" id="MF_04081"/>
    </source>
</evidence>
<evidence type="ECO:0000256" key="3">
    <source>
        <dbReference type="SAM" id="MobiDB-lite"/>
    </source>
</evidence>
<dbReference type="EMBL" id="AJ271370">
    <property type="protein sequence ID" value="CAB96340.1"/>
    <property type="molecule type" value="Genomic_DNA"/>
</dbReference>
<dbReference type="Proteomes" id="UP000007714">
    <property type="component" value="Segment"/>
</dbReference>
<dbReference type="GO" id="GO:0030430">
    <property type="term" value="C:host cell cytoplasm"/>
    <property type="evidence" value="ECO:0007669"/>
    <property type="project" value="UniProtKB-SubCell"/>
</dbReference>
<dbReference type="GO" id="GO:0020002">
    <property type="term" value="C:host cell plasma membrane"/>
    <property type="evidence" value="ECO:0007669"/>
    <property type="project" value="UniProtKB-SubCell"/>
</dbReference>
<dbReference type="GO" id="GO:0016020">
    <property type="term" value="C:membrane"/>
    <property type="evidence" value="ECO:0007669"/>
    <property type="project" value="UniProtKB-UniRule"/>
</dbReference>
<dbReference type="GO" id="GO:0044423">
    <property type="term" value="C:virion component"/>
    <property type="evidence" value="ECO:0007669"/>
    <property type="project" value="UniProtKB-UniRule"/>
</dbReference>
<dbReference type="GO" id="GO:0046872">
    <property type="term" value="F:metal ion binding"/>
    <property type="evidence" value="ECO:0007669"/>
    <property type="project" value="UniProtKB-KW"/>
</dbReference>
<dbReference type="GO" id="GO:0003723">
    <property type="term" value="F:RNA binding"/>
    <property type="evidence" value="ECO:0007669"/>
    <property type="project" value="UniProtKB-UniRule"/>
</dbReference>
<dbReference type="GO" id="GO:0019058">
    <property type="term" value="P:viral life cycle"/>
    <property type="evidence" value="ECO:0007669"/>
    <property type="project" value="InterPro"/>
</dbReference>
<dbReference type="HAMAP" id="MF_04081">
    <property type="entry name" value="HIV_VIF"/>
    <property type="match status" value="1"/>
</dbReference>
<dbReference type="InterPro" id="IPR000475">
    <property type="entry name" value="Vif"/>
</dbReference>
<dbReference type="Pfam" id="PF00559">
    <property type="entry name" value="Vif"/>
    <property type="match status" value="1"/>
</dbReference>
<dbReference type="PRINTS" id="PR00349">
    <property type="entry name" value="VIRIONINFFCT"/>
</dbReference>
<dbReference type="PROSITE" id="PS00059">
    <property type="entry name" value="ADH_ZINC"/>
    <property type="match status" value="1"/>
</dbReference>
<proteinExistence type="inferred from homology"/>
<organism>
    <name type="scientific">Human immunodeficiency virus type 1 group N (isolate YBF106)</name>
    <name type="common">HIV-1</name>
    <dbReference type="NCBI Taxonomy" id="388819"/>
    <lineage>
        <taxon>Viruses</taxon>
        <taxon>Riboviria</taxon>
        <taxon>Pararnavirae</taxon>
        <taxon>Artverviricota</taxon>
        <taxon>Revtraviricetes</taxon>
        <taxon>Ortervirales</taxon>
        <taxon>Retroviridae</taxon>
        <taxon>Orthoretrovirinae</taxon>
        <taxon>Lentivirus</taxon>
        <taxon>Human immunodeficiency virus type 1</taxon>
    </lineage>
</organism>
<feature type="chain" id="PRO_0000441081" description="Virion infectivity factor" evidence="2">
    <location>
        <begin position="1"/>
        <end position="192"/>
    </location>
</feature>
<feature type="chain" id="PRO_0000441082" description="p17" evidence="2">
    <location>
        <begin position="1"/>
        <end position="150"/>
    </location>
</feature>
<feature type="chain" id="PRO_0000441083" description="p7" evidence="2">
    <location>
        <begin position="151"/>
        <end position="192"/>
    </location>
</feature>
<feature type="region of interest" description="Interaction with host APOBEC3F; F1-box" evidence="2">
    <location>
        <begin position="14"/>
        <end position="17"/>
    </location>
</feature>
<feature type="region of interest" description="Interaction with host APOBEC3G; G-box" evidence="2">
    <location>
        <begin position="40"/>
        <end position="44"/>
    </location>
</feature>
<feature type="region of interest" description="Interaction with host APOBEC3F and APOBEC3G; FG-box" evidence="2">
    <location>
        <begin position="54"/>
        <end position="72"/>
    </location>
</feature>
<feature type="region of interest" description="Interaction with host APOBEC3F; F2-box" evidence="2">
    <location>
        <begin position="74"/>
        <end position="79"/>
    </location>
</feature>
<feature type="region of interest" description="RNA-binding" evidence="2">
    <location>
        <begin position="75"/>
        <end position="114"/>
    </location>
</feature>
<feature type="region of interest" description="SOCS box-like" evidence="2">
    <location>
        <begin position="151"/>
        <end position="180"/>
    </location>
</feature>
<feature type="region of interest" description="Multimerization" evidence="2">
    <location>
        <begin position="151"/>
        <end position="164"/>
    </location>
</feature>
<feature type="region of interest" description="Disordered" evidence="3">
    <location>
        <begin position="160"/>
        <end position="192"/>
    </location>
</feature>
<feature type="region of interest" description="Membrane association" evidence="2">
    <location>
        <begin position="171"/>
        <end position="172"/>
    </location>
</feature>
<feature type="short sequence motif" description="HCCH motif" evidence="2">
    <location>
        <begin position="108"/>
        <end position="139"/>
    </location>
</feature>
<feature type="short sequence motif" description="BC-box-like motif" evidence="2">
    <location>
        <begin position="144"/>
        <end position="153"/>
    </location>
</feature>
<feature type="compositionally biased region" description="Basic and acidic residues" evidence="3">
    <location>
        <begin position="169"/>
        <end position="179"/>
    </location>
</feature>
<feature type="binding site" evidence="2">
    <location>
        <position position="108"/>
    </location>
    <ligand>
        <name>Zn(2+)</name>
        <dbReference type="ChEBI" id="CHEBI:29105"/>
    </ligand>
</feature>
<feature type="binding site" evidence="2">
    <location>
        <position position="114"/>
    </location>
    <ligand>
        <name>Zn(2+)</name>
        <dbReference type="ChEBI" id="CHEBI:29105"/>
    </ligand>
</feature>
<feature type="binding site" evidence="2">
    <location>
        <position position="133"/>
    </location>
    <ligand>
        <name>Zn(2+)</name>
        <dbReference type="ChEBI" id="CHEBI:29105"/>
    </ligand>
</feature>
<feature type="binding site" evidence="2">
    <location>
        <position position="139"/>
    </location>
    <ligand>
        <name>Zn(2+)</name>
        <dbReference type="ChEBI" id="CHEBI:29105"/>
    </ligand>
</feature>
<feature type="site" description="Cleavage in virion (by viral protease)" evidence="2">
    <location>
        <begin position="150"/>
        <end position="151"/>
    </location>
</feature>
<feature type="modified residue" description="Phosphothreonine; by host MAP4K1" evidence="2">
    <location>
        <position position="96"/>
    </location>
</feature>
<feature type="modified residue" description="Phosphoserine; by host MAP4K1" evidence="2">
    <location>
        <position position="165"/>
    </location>
</feature>